<sequence>MNQSYGRLVSRAAIAATAMASLLLLIKIFAWWYTGSVSILAALVDSLVDIGASLTNLLVVRYSLQPADDNHSFGHGKAESLAALAQSMFISGSALFLFLTGIQHLISPTPMTDPGVGVIVTIVALICTIILVSFQRWVVRRTQSQAVRADMLHYQSDVMMNGAILLALGLSWYGWHRADALFALGIGIYILYSALRMGYEAVQSLLDRALPDEERQEIIDIVTSWPGVSGAHDLRTRQSGPTRFIQIHLEMEDSLPLVQAHMVADQVEQAILRRFPGSDVIIHQDPCSVVPREGKRSMLS</sequence>
<accession>Q32A79</accession>
<feature type="chain" id="PRO_1000024329" description="Cation-efflux pump FieF">
    <location>
        <begin position="1"/>
        <end position="300"/>
    </location>
</feature>
<feature type="transmembrane region" description="Helical" evidence="1">
    <location>
        <begin position="12"/>
        <end position="32"/>
    </location>
</feature>
<feature type="transmembrane region" description="Helical" evidence="1">
    <location>
        <begin position="39"/>
        <end position="59"/>
    </location>
</feature>
<feature type="transmembrane region" description="Helical" evidence="1">
    <location>
        <begin position="82"/>
        <end position="102"/>
    </location>
</feature>
<feature type="transmembrane region" description="Helical" evidence="1">
    <location>
        <begin position="114"/>
        <end position="134"/>
    </location>
</feature>
<feature type="transmembrane region" description="Helical" evidence="1">
    <location>
        <begin position="156"/>
        <end position="176"/>
    </location>
</feature>
<feature type="transmembrane region" description="Helical" evidence="1">
    <location>
        <begin position="178"/>
        <end position="198"/>
    </location>
</feature>
<feature type="binding site" evidence="1">
    <location>
        <position position="45"/>
    </location>
    <ligand>
        <name>Zn(2+)</name>
        <dbReference type="ChEBI" id="CHEBI:29105"/>
    </ligand>
</feature>
<feature type="binding site" evidence="1">
    <location>
        <position position="49"/>
    </location>
    <ligand>
        <name>Zn(2+)</name>
        <dbReference type="ChEBI" id="CHEBI:29105"/>
    </ligand>
</feature>
<feature type="binding site" evidence="1">
    <location>
        <position position="153"/>
    </location>
    <ligand>
        <name>Zn(2+)</name>
        <dbReference type="ChEBI" id="CHEBI:29105"/>
    </ligand>
</feature>
<feature type="binding site" evidence="1">
    <location>
        <position position="157"/>
    </location>
    <ligand>
        <name>Zn(2+)</name>
        <dbReference type="ChEBI" id="CHEBI:29105"/>
    </ligand>
</feature>
<evidence type="ECO:0000255" key="1">
    <source>
        <dbReference type="HAMAP-Rule" id="MF_01425"/>
    </source>
</evidence>
<protein>
    <recommendedName>
        <fullName evidence="1">Cation-efflux pump FieF</fullName>
    </recommendedName>
</protein>
<organism>
    <name type="scientific">Shigella dysenteriae serotype 1 (strain Sd197)</name>
    <dbReference type="NCBI Taxonomy" id="300267"/>
    <lineage>
        <taxon>Bacteria</taxon>
        <taxon>Pseudomonadati</taxon>
        <taxon>Pseudomonadota</taxon>
        <taxon>Gammaproteobacteria</taxon>
        <taxon>Enterobacterales</taxon>
        <taxon>Enterobacteriaceae</taxon>
        <taxon>Shigella</taxon>
    </lineage>
</organism>
<keyword id="KW-0997">Cell inner membrane</keyword>
<keyword id="KW-1003">Cell membrane</keyword>
<keyword id="KW-0406">Ion transport</keyword>
<keyword id="KW-0408">Iron</keyword>
<keyword id="KW-0410">Iron transport</keyword>
<keyword id="KW-0472">Membrane</keyword>
<keyword id="KW-0479">Metal-binding</keyword>
<keyword id="KW-1185">Reference proteome</keyword>
<keyword id="KW-0812">Transmembrane</keyword>
<keyword id="KW-1133">Transmembrane helix</keyword>
<keyword id="KW-0813">Transport</keyword>
<keyword id="KW-0862">Zinc</keyword>
<keyword id="KW-0864">Zinc transport</keyword>
<name>FIEF_SHIDS</name>
<reference key="1">
    <citation type="journal article" date="2005" name="Nucleic Acids Res.">
        <title>Genome dynamics and diversity of Shigella species, the etiologic agents of bacillary dysentery.</title>
        <authorList>
            <person name="Yang F."/>
            <person name="Yang J."/>
            <person name="Zhang X."/>
            <person name="Chen L."/>
            <person name="Jiang Y."/>
            <person name="Yan Y."/>
            <person name="Tang X."/>
            <person name="Wang J."/>
            <person name="Xiong Z."/>
            <person name="Dong J."/>
            <person name="Xue Y."/>
            <person name="Zhu Y."/>
            <person name="Xu X."/>
            <person name="Sun L."/>
            <person name="Chen S."/>
            <person name="Nie H."/>
            <person name="Peng J."/>
            <person name="Xu J."/>
            <person name="Wang Y."/>
            <person name="Yuan Z."/>
            <person name="Wen Y."/>
            <person name="Yao Z."/>
            <person name="Shen Y."/>
            <person name="Qiang B."/>
            <person name="Hou Y."/>
            <person name="Yu J."/>
            <person name="Jin Q."/>
        </authorList>
    </citation>
    <scope>NUCLEOTIDE SEQUENCE [LARGE SCALE GENOMIC DNA]</scope>
    <source>
        <strain>Sd197</strain>
    </source>
</reference>
<gene>
    <name evidence="1" type="primary">fieF</name>
    <name type="ordered locus">SDY_3832</name>
</gene>
<comment type="function">
    <text evidence="1">Divalent metal cation transporter which exports Zn(2+), Cd(2+) and possibly Fe(2+). May be involved in zinc and iron detoxification by efflux.</text>
</comment>
<comment type="catalytic activity">
    <reaction evidence="1">
        <text>Zn(2+)(in) + H(+)(out) = Zn(2+)(out) + H(+)(in)</text>
        <dbReference type="Rhea" id="RHEA:28839"/>
        <dbReference type="ChEBI" id="CHEBI:15378"/>
        <dbReference type="ChEBI" id="CHEBI:29105"/>
    </reaction>
</comment>
<comment type="catalytic activity">
    <reaction evidence="1">
        <text>Cd(2+)(in) + H(+)(out) = Cd(2+)(out) + H(+)(in)</text>
        <dbReference type="Rhea" id="RHEA:28739"/>
        <dbReference type="ChEBI" id="CHEBI:15378"/>
        <dbReference type="ChEBI" id="CHEBI:48775"/>
    </reaction>
</comment>
<comment type="catalytic activity">
    <reaction evidence="1">
        <text>Fe(2+)(in) + H(+)(out) = Fe(2+)(out) + H(+)(in)</text>
        <dbReference type="Rhea" id="RHEA:29439"/>
        <dbReference type="ChEBI" id="CHEBI:15378"/>
        <dbReference type="ChEBI" id="CHEBI:29033"/>
    </reaction>
</comment>
<comment type="subunit">
    <text evidence="1">Homodimer.</text>
</comment>
<comment type="subcellular location">
    <subcellularLocation>
        <location evidence="1">Cell inner membrane</location>
        <topology evidence="1">Multi-pass membrane protein</topology>
    </subcellularLocation>
</comment>
<comment type="similarity">
    <text evidence="1">Belongs to the cation diffusion facilitator (CDF) transporter (TC 2.A.4) family. FieF subfamily.</text>
</comment>
<dbReference type="EMBL" id="CP000034">
    <property type="protein sequence ID" value="ABB63776.1"/>
    <property type="molecule type" value="Genomic_DNA"/>
</dbReference>
<dbReference type="RefSeq" id="WP_001076742.1">
    <property type="nucleotide sequence ID" value="NC_007606.1"/>
</dbReference>
<dbReference type="RefSeq" id="YP_405267.1">
    <property type="nucleotide sequence ID" value="NC_007606.1"/>
</dbReference>
<dbReference type="SMR" id="Q32A79"/>
<dbReference type="STRING" id="300267.SDY_3832"/>
<dbReference type="EnsemblBacteria" id="ABB63776">
    <property type="protein sequence ID" value="ABB63776"/>
    <property type="gene ID" value="SDY_3832"/>
</dbReference>
<dbReference type="GeneID" id="75204588"/>
<dbReference type="KEGG" id="sdy:SDY_3832"/>
<dbReference type="PATRIC" id="fig|300267.13.peg.4526"/>
<dbReference type="HOGENOM" id="CLU_013430_3_0_6"/>
<dbReference type="Proteomes" id="UP000002716">
    <property type="component" value="Chromosome"/>
</dbReference>
<dbReference type="GO" id="GO:0005886">
    <property type="term" value="C:plasma membrane"/>
    <property type="evidence" value="ECO:0007669"/>
    <property type="project" value="UniProtKB-SubCell"/>
</dbReference>
<dbReference type="GO" id="GO:0015086">
    <property type="term" value="F:cadmium ion transmembrane transporter activity"/>
    <property type="evidence" value="ECO:0007669"/>
    <property type="project" value="UniProtKB-UniRule"/>
</dbReference>
<dbReference type="GO" id="GO:0015093">
    <property type="term" value="F:ferrous iron transmembrane transporter activity"/>
    <property type="evidence" value="ECO:0007669"/>
    <property type="project" value="TreeGrafter"/>
</dbReference>
<dbReference type="GO" id="GO:0046872">
    <property type="term" value="F:metal ion binding"/>
    <property type="evidence" value="ECO:0007669"/>
    <property type="project" value="UniProtKB-KW"/>
</dbReference>
<dbReference type="GO" id="GO:0015341">
    <property type="term" value="F:zinc efflux antiporter activity"/>
    <property type="evidence" value="ECO:0007669"/>
    <property type="project" value="TreeGrafter"/>
</dbReference>
<dbReference type="GO" id="GO:0006882">
    <property type="term" value="P:intracellular zinc ion homeostasis"/>
    <property type="evidence" value="ECO:0007669"/>
    <property type="project" value="TreeGrafter"/>
</dbReference>
<dbReference type="FunFam" id="1.20.1510.10:FF:000001">
    <property type="entry name" value="Ferrous-iron efflux pump FieF"/>
    <property type="match status" value="1"/>
</dbReference>
<dbReference type="FunFam" id="3.30.70.1350:FF:000002">
    <property type="entry name" value="Ferrous-iron efflux pump FieF"/>
    <property type="match status" value="1"/>
</dbReference>
<dbReference type="Gene3D" id="1.20.1510.10">
    <property type="entry name" value="Cation efflux protein transmembrane domain"/>
    <property type="match status" value="1"/>
</dbReference>
<dbReference type="Gene3D" id="3.30.70.1350">
    <property type="entry name" value="Cation efflux protein, cytoplasmic domain"/>
    <property type="match status" value="1"/>
</dbReference>
<dbReference type="HAMAP" id="MF_01425">
    <property type="entry name" value="Cation_efflux_FieF"/>
    <property type="match status" value="1"/>
</dbReference>
<dbReference type="InterPro" id="IPR002524">
    <property type="entry name" value="Cation_efflux"/>
</dbReference>
<dbReference type="InterPro" id="IPR027470">
    <property type="entry name" value="Cation_efflux_CTD"/>
</dbReference>
<dbReference type="InterPro" id="IPR036837">
    <property type="entry name" value="Cation_efflux_CTD_sf"/>
</dbReference>
<dbReference type="InterPro" id="IPR023783">
    <property type="entry name" value="Cation_efflux_FieF"/>
</dbReference>
<dbReference type="InterPro" id="IPR027469">
    <property type="entry name" value="Cation_efflux_TMD_sf"/>
</dbReference>
<dbReference type="InterPro" id="IPR050291">
    <property type="entry name" value="CDF_Transporter"/>
</dbReference>
<dbReference type="NCBIfam" id="TIGR01297">
    <property type="entry name" value="CDF"/>
    <property type="match status" value="1"/>
</dbReference>
<dbReference type="NCBIfam" id="NF007064">
    <property type="entry name" value="PRK09509.1"/>
    <property type="match status" value="1"/>
</dbReference>
<dbReference type="PANTHER" id="PTHR43840:SF41">
    <property type="entry name" value="CATION-EFFLUX PUMP FIEF"/>
    <property type="match status" value="1"/>
</dbReference>
<dbReference type="PANTHER" id="PTHR43840">
    <property type="entry name" value="MITOCHONDRIAL METAL TRANSPORTER 1-RELATED"/>
    <property type="match status" value="1"/>
</dbReference>
<dbReference type="Pfam" id="PF01545">
    <property type="entry name" value="Cation_efflux"/>
    <property type="match status" value="1"/>
</dbReference>
<dbReference type="Pfam" id="PF16916">
    <property type="entry name" value="ZT_dimer"/>
    <property type="match status" value="1"/>
</dbReference>
<dbReference type="SUPFAM" id="SSF160240">
    <property type="entry name" value="Cation efflux protein cytoplasmic domain-like"/>
    <property type="match status" value="1"/>
</dbReference>
<dbReference type="SUPFAM" id="SSF161111">
    <property type="entry name" value="Cation efflux protein transmembrane domain-like"/>
    <property type="match status" value="1"/>
</dbReference>
<proteinExistence type="inferred from homology"/>